<dbReference type="EMBL" id="AP009366">
    <property type="protein sequence ID" value="BAF49790.1"/>
    <property type="molecule type" value="Genomic_DNA"/>
</dbReference>
<dbReference type="RefSeq" id="YP_001122966.1">
    <property type="nucleotide sequence ID" value="NC_009265.1"/>
</dbReference>
<dbReference type="SMR" id="A4QJD5"/>
<dbReference type="GeneID" id="4968545"/>
<dbReference type="GO" id="GO:0009535">
    <property type="term" value="C:chloroplast thylakoid membrane"/>
    <property type="evidence" value="ECO:0007669"/>
    <property type="project" value="UniProtKB-SubCell"/>
</dbReference>
<dbReference type="GO" id="GO:0009522">
    <property type="term" value="C:photosystem I"/>
    <property type="evidence" value="ECO:0007669"/>
    <property type="project" value="UniProtKB-KW"/>
</dbReference>
<dbReference type="GO" id="GO:0015979">
    <property type="term" value="P:photosynthesis"/>
    <property type="evidence" value="ECO:0007669"/>
    <property type="project" value="UniProtKB-UniRule"/>
</dbReference>
<dbReference type="FunFam" id="1.20.5.510:FF:000001">
    <property type="entry name" value="Photosystem I reaction center subunit IX"/>
    <property type="match status" value="1"/>
</dbReference>
<dbReference type="Gene3D" id="1.20.5.510">
    <property type="entry name" value="Single helix bin"/>
    <property type="match status" value="1"/>
</dbReference>
<dbReference type="HAMAP" id="MF_00522">
    <property type="entry name" value="PSI_PsaJ"/>
    <property type="match status" value="1"/>
</dbReference>
<dbReference type="InterPro" id="IPR002615">
    <property type="entry name" value="PSI_PsaJ"/>
</dbReference>
<dbReference type="InterPro" id="IPR036062">
    <property type="entry name" value="PSI_PsaJ_sf"/>
</dbReference>
<dbReference type="PANTHER" id="PTHR36082">
    <property type="match status" value="1"/>
</dbReference>
<dbReference type="PANTHER" id="PTHR36082:SF2">
    <property type="entry name" value="PHOTOSYSTEM I REACTION CENTER SUBUNIT IX"/>
    <property type="match status" value="1"/>
</dbReference>
<dbReference type="Pfam" id="PF01701">
    <property type="entry name" value="PSI_PsaJ"/>
    <property type="match status" value="1"/>
</dbReference>
<dbReference type="SUPFAM" id="SSF81544">
    <property type="entry name" value="Subunit IX of photosystem I reaction centre, PsaJ"/>
    <property type="match status" value="1"/>
</dbReference>
<keyword id="KW-0150">Chloroplast</keyword>
<keyword id="KW-0472">Membrane</keyword>
<keyword id="KW-0602">Photosynthesis</keyword>
<keyword id="KW-0603">Photosystem I</keyword>
<keyword id="KW-0934">Plastid</keyword>
<keyword id="KW-0793">Thylakoid</keyword>
<keyword id="KW-0812">Transmembrane</keyword>
<keyword id="KW-1133">Transmembrane helix</keyword>
<protein>
    <recommendedName>
        <fullName evidence="1">Photosystem I reaction center subunit IX</fullName>
    </recommendedName>
    <alternativeName>
        <fullName evidence="1">PSI-J</fullName>
    </alternativeName>
</protein>
<geneLocation type="chloroplast"/>
<gene>
    <name evidence="1" type="primary">psaJ</name>
</gene>
<proteinExistence type="inferred from homology"/>
<reference key="1">
    <citation type="submission" date="2007-03" db="EMBL/GenBank/DDBJ databases">
        <title>Sequencing analysis of Aethionema coridifolium chloroplast DNA.</title>
        <authorList>
            <person name="Hosouchi T."/>
            <person name="Tsuruoka H."/>
            <person name="Kotani H."/>
        </authorList>
    </citation>
    <scope>NUCLEOTIDE SEQUENCE [LARGE SCALE GENOMIC DNA]</scope>
</reference>
<sequence length="43" mass="4804">MRDLKTYLSVAPVLSTLWFGSLAGLLIEINRLFPDGLTFPSSY</sequence>
<accession>A4QJD5</accession>
<organism>
    <name type="scientific">Aethionema cordifolium</name>
    <name type="common">Lebanon stonecress</name>
    <dbReference type="NCBI Taxonomy" id="434059"/>
    <lineage>
        <taxon>Eukaryota</taxon>
        <taxon>Viridiplantae</taxon>
        <taxon>Streptophyta</taxon>
        <taxon>Embryophyta</taxon>
        <taxon>Tracheophyta</taxon>
        <taxon>Spermatophyta</taxon>
        <taxon>Magnoliopsida</taxon>
        <taxon>eudicotyledons</taxon>
        <taxon>Gunneridae</taxon>
        <taxon>Pentapetalae</taxon>
        <taxon>rosids</taxon>
        <taxon>malvids</taxon>
        <taxon>Brassicales</taxon>
        <taxon>Brassicaceae</taxon>
        <taxon>Aethionemeae</taxon>
        <taxon>Aethionema</taxon>
    </lineage>
</organism>
<evidence type="ECO:0000255" key="1">
    <source>
        <dbReference type="HAMAP-Rule" id="MF_00522"/>
    </source>
</evidence>
<comment type="function">
    <text evidence="1">May help in the organization of the PsaE and PsaF subunits.</text>
</comment>
<comment type="subcellular location">
    <subcellularLocation>
        <location evidence="1">Plastid</location>
        <location evidence="1">Chloroplast thylakoid membrane</location>
        <topology evidence="1">Single-pass membrane protein</topology>
    </subcellularLocation>
</comment>
<comment type="similarity">
    <text evidence="1">Belongs to the PsaJ family.</text>
</comment>
<feature type="chain" id="PRO_0000354125" description="Photosystem I reaction center subunit IX">
    <location>
        <begin position="1"/>
        <end position="43"/>
    </location>
</feature>
<feature type="transmembrane region" description="Helical" evidence="1">
    <location>
        <begin position="7"/>
        <end position="27"/>
    </location>
</feature>
<name>PSAJ_AETCO</name>